<accession>B3EWK6</accession>
<organism>
    <name type="scientific">Bos indicus</name>
    <name type="common">Zebu</name>
    <dbReference type="NCBI Taxonomy" id="9915"/>
    <lineage>
        <taxon>Eukaryota</taxon>
        <taxon>Metazoa</taxon>
        <taxon>Chordata</taxon>
        <taxon>Craniata</taxon>
        <taxon>Vertebrata</taxon>
        <taxon>Euteleostomi</taxon>
        <taxon>Mammalia</taxon>
        <taxon>Eutheria</taxon>
        <taxon>Laurasiatheria</taxon>
        <taxon>Artiodactyla</taxon>
        <taxon>Ruminantia</taxon>
        <taxon>Pecora</taxon>
        <taxon>Bovidae</taxon>
        <taxon>Bovinae</taxon>
        <taxon>Bos</taxon>
    </lineage>
</organism>
<sequence>DQDEGVSTEPTQVGPAELHNDETCVGPLVYRN</sequence>
<protein>
    <recommendedName>
        <fullName evidence="1">Seminal plasma protein PDC-109</fullName>
    </recommendedName>
    <alternativeName>
        <fullName evidence="1">BSP-A1 and BSP-A2</fullName>
    </alternativeName>
    <alternativeName>
        <fullName evidence="1">Seminal vesicle secretory protein 109</fullName>
        <shortName evidence="1">SVSP109</shortName>
    </alternativeName>
</protein>
<comment type="function">
    <text evidence="1 5">Could enhance the fertilizing capacity of bull spermatozoa upon interaction with heparin-like glycosaminoglycans present in the female genital tract. Exhibits both simulatory and inhibitory actions on the release of pituitary gonadotropins (By similarity). Binds to heparin and gelatin.</text>
</comment>
<comment type="subunit">
    <text evidence="1">Homodimer.</text>
</comment>
<comment type="subcellular location">
    <subcellularLocation>
        <location evidence="5">Secreted</location>
    </subcellularLocation>
</comment>
<comment type="similarity">
    <text evidence="2">Belongs to the seminal plasma protein family.</text>
</comment>
<proteinExistence type="evidence at protein level"/>
<feature type="chain" id="PRO_0000418086" description="Seminal plasma protein PDC-109">
    <location>
        <begin position="1"/>
        <end position="32" status="greater than"/>
    </location>
</feature>
<feature type="domain" description="Fibronectin type-II" evidence="3">
    <location>
        <begin position="19"/>
        <end position="32" status="greater than"/>
    </location>
</feature>
<feature type="region of interest" description="Disordered" evidence="4">
    <location>
        <begin position="1"/>
        <end position="32"/>
    </location>
</feature>
<feature type="glycosylation site" description="O-linked (GalNAc...) threonine" evidence="1">
    <location>
        <position position="11"/>
    </location>
</feature>
<feature type="disulfide bond" evidence="1 3">
    <location>
        <begin position="24"/>
        <end status="unknown"/>
    </location>
</feature>
<feature type="non-terminal residue" evidence="6">
    <location>
        <position position="32"/>
    </location>
</feature>
<reference evidence="7" key="1">
    <citation type="submission" date="2012-04" db="UniProtKB">
        <title>N-terminal sequence of Binder of Sperm 1 (BSP1/PDC-109) homologue purified from the seminal plasma of Bos indicus bulls.</title>
        <authorList>
            <person name="Martins J.A.M."/>
            <person name="Souza C.E.A."/>
            <person name="Cadavid V.G."/>
            <person name="Rego J.P.A."/>
            <person name="Vasconcelos I.M."/>
            <person name="Moura A.A.A."/>
        </authorList>
    </citation>
    <scope>PROTEIN SEQUENCE</scope>
    <scope>SUBCELLULAR LOCATION</scope>
    <source>
        <strain evidence="5">Guzera</strain>
        <tissue evidence="5">Seminal plasma</tissue>
    </source>
</reference>
<evidence type="ECO:0000250" key="1">
    <source>
        <dbReference type="UniProtKB" id="P02784"/>
    </source>
</evidence>
<evidence type="ECO:0000255" key="2"/>
<evidence type="ECO:0000255" key="3">
    <source>
        <dbReference type="PROSITE-ProRule" id="PRU00479"/>
    </source>
</evidence>
<evidence type="ECO:0000256" key="4">
    <source>
        <dbReference type="SAM" id="MobiDB-lite"/>
    </source>
</evidence>
<evidence type="ECO:0000269" key="5">
    <source ref="1"/>
</evidence>
<evidence type="ECO:0000303" key="6">
    <source ref="1"/>
</evidence>
<evidence type="ECO:0000305" key="7"/>
<dbReference type="GO" id="GO:0005576">
    <property type="term" value="C:extracellular region"/>
    <property type="evidence" value="ECO:0007669"/>
    <property type="project" value="UniProtKB-SubCell"/>
</dbReference>
<dbReference type="GO" id="GO:0007338">
    <property type="term" value="P:single fertilization"/>
    <property type="evidence" value="ECO:0007669"/>
    <property type="project" value="UniProtKB-KW"/>
</dbReference>
<keyword id="KW-0903">Direct protein sequencing</keyword>
<keyword id="KW-1015">Disulfide bond</keyword>
<keyword id="KW-0278">Fertilization</keyword>
<keyword id="KW-0325">Glycoprotein</keyword>
<keyword id="KW-0964">Secreted</keyword>
<name>SFP1_BOSIN</name>